<gene>
    <name type="ORF">DDB_G0272484</name>
</gene>
<organism>
    <name type="scientific">Dictyostelium discoideum</name>
    <name type="common">Social amoeba</name>
    <dbReference type="NCBI Taxonomy" id="44689"/>
    <lineage>
        <taxon>Eukaryota</taxon>
        <taxon>Amoebozoa</taxon>
        <taxon>Evosea</taxon>
        <taxon>Eumycetozoa</taxon>
        <taxon>Dictyostelia</taxon>
        <taxon>Dictyosteliales</taxon>
        <taxon>Dictyosteliaceae</taxon>
        <taxon>Dictyostelium</taxon>
    </lineage>
</organism>
<feature type="chain" id="PRO_0000361972" description="Deoxynucleoside triphosphate triphosphohydrolase SAMHD1 homolog">
    <location>
        <begin position="1"/>
        <end position="514"/>
    </location>
</feature>
<feature type="domain" description="HD" evidence="2">
    <location>
        <begin position="128"/>
        <end position="259"/>
    </location>
</feature>
<feature type="region of interest" description="Disordered" evidence="3">
    <location>
        <begin position="1"/>
        <end position="24"/>
    </location>
</feature>
<feature type="active site" evidence="1">
    <location>
        <position position="196"/>
    </location>
</feature>
<feature type="binding site" description="in other chain" evidence="1">
    <location>
        <position position="80"/>
    </location>
    <ligand>
        <name>GTP</name>
        <dbReference type="ChEBI" id="CHEBI:37565"/>
        <note>ligand shared between two neighboring subunits</note>
    </ligand>
</feature>
<feature type="binding site" evidence="1">
    <location>
        <position position="83"/>
    </location>
    <ligand>
        <name>a 2'-deoxyribonucleoside 5'-triphosphate</name>
        <dbReference type="ChEBI" id="CHEBI:61560"/>
        <note>ligand shared between two neighboring subunits</note>
    </ligand>
</feature>
<feature type="binding site" description="in other chain" evidence="1">
    <location>
        <begin position="101"/>
        <end position="109"/>
    </location>
    <ligand>
        <name>GTP</name>
        <dbReference type="ChEBI" id="CHEBI:37565"/>
        <note>ligand shared between two neighboring subunits</note>
    </ligand>
</feature>
<feature type="binding site" evidence="1">
    <location>
        <position position="113"/>
    </location>
    <ligand>
        <name>substrate</name>
    </ligand>
</feature>
<feature type="binding site" evidence="1">
    <location>
        <position position="128"/>
    </location>
    <ligand>
        <name>substrate</name>
    </ligand>
</feature>
<feature type="binding site" evidence="1">
    <location>
        <position position="131"/>
    </location>
    <ligand>
        <name>Zn(2+)</name>
        <dbReference type="ChEBI" id="CHEBI:29105"/>
    </ligand>
</feature>
<feature type="binding site" evidence="1">
    <location>
        <position position="170"/>
    </location>
    <ligand>
        <name>Zn(2+)</name>
        <dbReference type="ChEBI" id="CHEBI:29105"/>
    </ligand>
</feature>
<feature type="binding site" evidence="1">
    <location>
        <position position="171"/>
    </location>
    <ligand>
        <name>Zn(2+)</name>
        <dbReference type="ChEBI" id="CHEBI:29105"/>
    </ligand>
</feature>
<feature type="binding site" evidence="1">
    <location>
        <position position="174"/>
    </location>
    <ligand>
        <name>substrate</name>
    </ligand>
</feature>
<feature type="binding site" evidence="1">
    <location>
        <begin position="252"/>
        <end position="258"/>
    </location>
    <ligand>
        <name>substrate</name>
    </ligand>
</feature>
<feature type="binding site" evidence="1">
    <location>
        <position position="254"/>
    </location>
    <ligand>
        <name>Zn(2+)</name>
        <dbReference type="ChEBI" id="CHEBI:29105"/>
    </ligand>
</feature>
<feature type="binding site" evidence="1">
    <location>
        <position position="258"/>
    </location>
    <ligand>
        <name>substrate</name>
    </ligand>
</feature>
<feature type="binding site" evidence="1">
    <location>
        <position position="262"/>
    </location>
    <ligand>
        <name>substrate</name>
    </ligand>
</feature>
<feature type="binding site" description="in other chain" evidence="1">
    <location>
        <position position="276"/>
    </location>
    <ligand>
        <name>a 2'-deoxyribonucleoside 5'-triphosphate</name>
        <dbReference type="ChEBI" id="CHEBI:61560"/>
        <note>ligand shared between two neighboring subunits</note>
    </ligand>
</feature>
<feature type="binding site" description="in other chain" evidence="1">
    <location>
        <begin position="291"/>
        <end position="293"/>
    </location>
    <ligand>
        <name>a 2'-deoxyribonucleoside 5'-triphosphate</name>
        <dbReference type="ChEBI" id="CHEBI:61560"/>
        <note>ligand shared between two neighboring subunits</note>
    </ligand>
</feature>
<feature type="binding site" description="in other chain" evidence="1">
    <location>
        <position position="297"/>
    </location>
    <ligand>
        <name>a 2'-deoxyribonucleoside 5'-triphosphate</name>
        <dbReference type="ChEBI" id="CHEBI:61560"/>
        <note>ligand shared between two neighboring subunits</note>
    </ligand>
</feature>
<feature type="binding site" evidence="1">
    <location>
        <position position="305"/>
    </location>
    <ligand>
        <name>substrate</name>
    </ligand>
</feature>
<feature type="binding site" evidence="1">
    <location>
        <begin position="309"/>
        <end position="314"/>
    </location>
    <ligand>
        <name>substrate</name>
    </ligand>
</feature>
<feature type="binding site" evidence="1">
    <location>
        <position position="315"/>
    </location>
    <ligand>
        <name>a 2'-deoxyribonucleoside 5'-triphosphate</name>
        <dbReference type="ChEBI" id="CHEBI:61560"/>
        <note>ligand shared between two neighboring subunits</note>
    </ligand>
</feature>
<feature type="binding site" evidence="1">
    <location>
        <position position="316"/>
    </location>
    <ligand>
        <name>a 2'-deoxyribonucleoside 5'-triphosphate</name>
        <dbReference type="ChEBI" id="CHEBI:61560"/>
        <note>ligand shared between two neighboring subunits</note>
    </ligand>
</feature>
<feature type="binding site" evidence="1">
    <location>
        <position position="380"/>
    </location>
    <ligand>
        <name>GTP</name>
        <dbReference type="ChEBI" id="CHEBI:37565"/>
        <note>ligand shared between two neighboring subunits</note>
    </ligand>
</feature>
<feature type="binding site" evidence="1">
    <location>
        <position position="384"/>
    </location>
    <ligand>
        <name>GTP</name>
        <dbReference type="ChEBI" id="CHEBI:37565"/>
        <note>ligand shared between two neighboring subunits</note>
    </ligand>
</feature>
<protein>
    <recommendedName>
        <fullName evidence="4">Deoxynucleoside triphosphate triphosphohydrolase SAMHD1 homolog</fullName>
        <shortName evidence="1">dNTPase</shortName>
        <ecNumber evidence="1">3.1.5.-</ecNumber>
    </recommendedName>
</protein>
<accession>B0G107</accession>
<accession>Q75JN7</accession>
<dbReference type="EC" id="3.1.5.-" evidence="1"/>
<dbReference type="EMBL" id="AAFI02000008">
    <property type="protein sequence ID" value="EDR41102.1"/>
    <property type="molecule type" value="Genomic_DNA"/>
</dbReference>
<dbReference type="RefSeq" id="XP_001732970.1">
    <property type="nucleotide sequence ID" value="XM_001732918.1"/>
</dbReference>
<dbReference type="SMR" id="B0G107"/>
<dbReference type="FunCoup" id="B0G107">
    <property type="interactions" value="202"/>
</dbReference>
<dbReference type="STRING" id="44689.B0G107"/>
<dbReference type="PaxDb" id="44689-DDB0237559"/>
<dbReference type="EnsemblProtists" id="EDR41102">
    <property type="protein sequence ID" value="EDR41102"/>
    <property type="gene ID" value="DDB_G0272484"/>
</dbReference>
<dbReference type="GeneID" id="8618486"/>
<dbReference type="KEGG" id="ddi:DDB_G0272484"/>
<dbReference type="dictyBase" id="DDB_G0272484"/>
<dbReference type="VEuPathDB" id="AmoebaDB:DDB_G0272484"/>
<dbReference type="eggNOG" id="KOG2681">
    <property type="taxonomic scope" value="Eukaryota"/>
</dbReference>
<dbReference type="HOGENOM" id="CLU_026821_1_3_1"/>
<dbReference type="InParanoid" id="B0G107"/>
<dbReference type="OMA" id="QVHGYIK"/>
<dbReference type="PhylomeDB" id="B0G107"/>
<dbReference type="Reactome" id="R-DDI-8956319">
    <property type="pathway name" value="Nucleotide catabolism"/>
</dbReference>
<dbReference type="PRO" id="PR:B0G107"/>
<dbReference type="Proteomes" id="UP000002195">
    <property type="component" value="Chromosome 2"/>
</dbReference>
<dbReference type="GO" id="GO:0005634">
    <property type="term" value="C:nucleus"/>
    <property type="evidence" value="ECO:0000318"/>
    <property type="project" value="GO_Central"/>
</dbReference>
<dbReference type="GO" id="GO:0106375">
    <property type="term" value="F:deoxynucleoside triphosphate hydrolase activity"/>
    <property type="evidence" value="ECO:0007669"/>
    <property type="project" value="RHEA"/>
</dbReference>
<dbReference type="GO" id="GO:0008832">
    <property type="term" value="F:dGTPase activity"/>
    <property type="evidence" value="ECO:0000318"/>
    <property type="project" value="GO_Central"/>
</dbReference>
<dbReference type="GO" id="GO:0005525">
    <property type="term" value="F:GTP binding"/>
    <property type="evidence" value="ECO:0007669"/>
    <property type="project" value="UniProtKB-KW"/>
</dbReference>
<dbReference type="GO" id="GO:0046872">
    <property type="term" value="F:metal ion binding"/>
    <property type="evidence" value="ECO:0007669"/>
    <property type="project" value="UniProtKB-KW"/>
</dbReference>
<dbReference type="GO" id="GO:0051607">
    <property type="term" value="P:defense response to virus"/>
    <property type="evidence" value="ECO:0007669"/>
    <property type="project" value="UniProtKB-KW"/>
</dbReference>
<dbReference type="GO" id="GO:0006203">
    <property type="term" value="P:dGTP catabolic process"/>
    <property type="evidence" value="ECO:0000318"/>
    <property type="project" value="GO_Central"/>
</dbReference>
<dbReference type="CDD" id="cd00077">
    <property type="entry name" value="HDc"/>
    <property type="match status" value="1"/>
</dbReference>
<dbReference type="FunFam" id="1.10.3210.10:FF:000030">
    <property type="entry name" value="Deoxynucleoside triphosphate triphosphohydrolase SAMHD1 homolog"/>
    <property type="match status" value="1"/>
</dbReference>
<dbReference type="FunFam" id="3.30.70.2760:FF:000004">
    <property type="entry name" value="HD domain containing protein"/>
    <property type="match status" value="1"/>
</dbReference>
<dbReference type="Gene3D" id="3.30.70.2760">
    <property type="match status" value="1"/>
</dbReference>
<dbReference type="Gene3D" id="1.10.3210.10">
    <property type="entry name" value="Hypothetical protein af1432"/>
    <property type="match status" value="1"/>
</dbReference>
<dbReference type="InterPro" id="IPR050135">
    <property type="entry name" value="dGTPase-like"/>
</dbReference>
<dbReference type="InterPro" id="IPR003607">
    <property type="entry name" value="HD/PDEase_dom"/>
</dbReference>
<dbReference type="InterPro" id="IPR045509">
    <property type="entry name" value="HD_assoc_2"/>
</dbReference>
<dbReference type="InterPro" id="IPR006674">
    <property type="entry name" value="HD_domain"/>
</dbReference>
<dbReference type="PANTHER" id="PTHR11373">
    <property type="entry name" value="DEOXYNUCLEOSIDE TRIPHOSPHATE TRIPHOSPHOHYDROLASE"/>
    <property type="match status" value="1"/>
</dbReference>
<dbReference type="PANTHER" id="PTHR11373:SF4">
    <property type="entry name" value="DEOXYNUCLEOSIDE TRIPHOSPHATE TRIPHOSPHOHYDROLASE SAMHD1"/>
    <property type="match status" value="1"/>
</dbReference>
<dbReference type="Pfam" id="PF01966">
    <property type="entry name" value="HD"/>
    <property type="match status" value="1"/>
</dbReference>
<dbReference type="Pfam" id="PF19276">
    <property type="entry name" value="HD_assoc_2"/>
    <property type="match status" value="1"/>
</dbReference>
<dbReference type="SMART" id="SM00471">
    <property type="entry name" value="HDc"/>
    <property type="match status" value="1"/>
</dbReference>
<dbReference type="SUPFAM" id="SSF109604">
    <property type="entry name" value="HD-domain/PDEase-like"/>
    <property type="match status" value="1"/>
</dbReference>
<dbReference type="PROSITE" id="PS51831">
    <property type="entry name" value="HD"/>
    <property type="match status" value="1"/>
</dbReference>
<sequence length="514" mass="60082">MNNTFKYVNEDVSGTEGEESDYDPSEFIRGYHESPRSPRLIDYEMGRGLMGNFKGLGINKVRQSNEYDNDTDYSSRKSSKIINDVIHGHMEVPDYIMDFIDTEQFQRLRDLKQVGTTSFVFPCASHSRFEHSIGVSHLAGKYIDRIKVTQPELEITEREQKFVRIAGLCHDLGHGPFSHAFESWVDQLGGSKRFHHEDMSIKMLNWIIDDHGLDEYDSDDIKFISSLIQGKHRPKERAFIYDIVANNRNSVDVDKFDYLSRDSYYLGRSTVCDFQRLMEFSKVIDDQICFLSKEIYNLYELFHTRYSLHKLVYTHKVGKSIEFMIADAFTEADQFLKISDQLEDPKEFINLSDSLLRRIETSKEPELEKSRKIIKNIRNRNLYKFVDEIIVSTDKIRWSADSLAEDIAKVGNGILESDIIVQNLKLNYAFKDKDPVQSTRFYTRYDSTQSFTIKKEETSHLIPNQFQEERIRIFCRSKEKCEQVQTAFRKLLKNHNLSPNPSFTVSPARNIKKI</sequence>
<evidence type="ECO:0000250" key="1">
    <source>
        <dbReference type="UniProtKB" id="Q9Y3Z3"/>
    </source>
</evidence>
<evidence type="ECO:0000255" key="2">
    <source>
        <dbReference type="PROSITE-ProRule" id="PRU01175"/>
    </source>
</evidence>
<evidence type="ECO:0000256" key="3">
    <source>
        <dbReference type="SAM" id="MobiDB-lite"/>
    </source>
</evidence>
<evidence type="ECO:0000305" key="4"/>
<name>SAMH1_DICDI</name>
<reference key="1">
    <citation type="journal article" date="2002" name="Nature">
        <title>Sequence and analysis of chromosome 2 of Dictyostelium discoideum.</title>
        <authorList>
            <person name="Gloeckner G."/>
            <person name="Eichinger L."/>
            <person name="Szafranski K."/>
            <person name="Pachebat J.A."/>
            <person name="Bankier A.T."/>
            <person name="Dear P.H."/>
            <person name="Lehmann R."/>
            <person name="Baumgart C."/>
            <person name="Parra G."/>
            <person name="Abril J.F."/>
            <person name="Guigo R."/>
            <person name="Kumpf K."/>
            <person name="Tunggal B."/>
            <person name="Cox E.C."/>
            <person name="Quail M.A."/>
            <person name="Platzer M."/>
            <person name="Rosenthal A."/>
            <person name="Noegel A.A."/>
        </authorList>
    </citation>
    <scope>NUCLEOTIDE SEQUENCE [LARGE SCALE GENOMIC DNA]</scope>
    <source>
        <strain>AX4</strain>
    </source>
</reference>
<reference key="2">
    <citation type="journal article" date="2005" name="Nature">
        <title>The genome of the social amoeba Dictyostelium discoideum.</title>
        <authorList>
            <person name="Eichinger L."/>
            <person name="Pachebat J.A."/>
            <person name="Gloeckner G."/>
            <person name="Rajandream M.A."/>
            <person name="Sucgang R."/>
            <person name="Berriman M."/>
            <person name="Song J."/>
            <person name="Olsen R."/>
            <person name="Szafranski K."/>
            <person name="Xu Q."/>
            <person name="Tunggal B."/>
            <person name="Kummerfeld S."/>
            <person name="Madera M."/>
            <person name="Konfortov B.A."/>
            <person name="Rivero F."/>
            <person name="Bankier A.T."/>
            <person name="Lehmann R."/>
            <person name="Hamlin N."/>
            <person name="Davies R."/>
            <person name="Gaudet P."/>
            <person name="Fey P."/>
            <person name="Pilcher K."/>
            <person name="Chen G."/>
            <person name="Saunders D."/>
            <person name="Sodergren E.J."/>
            <person name="Davis P."/>
            <person name="Kerhornou A."/>
            <person name="Nie X."/>
            <person name="Hall N."/>
            <person name="Anjard C."/>
            <person name="Hemphill L."/>
            <person name="Bason N."/>
            <person name="Farbrother P."/>
            <person name="Desany B."/>
            <person name="Just E."/>
            <person name="Morio T."/>
            <person name="Rost R."/>
            <person name="Churcher C.M."/>
            <person name="Cooper J."/>
            <person name="Haydock S."/>
            <person name="van Driessche N."/>
            <person name="Cronin A."/>
            <person name="Goodhead I."/>
            <person name="Muzny D.M."/>
            <person name="Mourier T."/>
            <person name="Pain A."/>
            <person name="Lu M."/>
            <person name="Harper D."/>
            <person name="Lindsay R."/>
            <person name="Hauser H."/>
            <person name="James K.D."/>
            <person name="Quiles M."/>
            <person name="Madan Babu M."/>
            <person name="Saito T."/>
            <person name="Buchrieser C."/>
            <person name="Wardroper A."/>
            <person name="Felder M."/>
            <person name="Thangavelu M."/>
            <person name="Johnson D."/>
            <person name="Knights A."/>
            <person name="Loulseged H."/>
            <person name="Mungall K.L."/>
            <person name="Oliver K."/>
            <person name="Price C."/>
            <person name="Quail M.A."/>
            <person name="Urushihara H."/>
            <person name="Hernandez J."/>
            <person name="Rabbinowitsch E."/>
            <person name="Steffen D."/>
            <person name="Sanders M."/>
            <person name="Ma J."/>
            <person name="Kohara Y."/>
            <person name="Sharp S."/>
            <person name="Simmonds M.N."/>
            <person name="Spiegler S."/>
            <person name="Tivey A."/>
            <person name="Sugano S."/>
            <person name="White B."/>
            <person name="Walker D."/>
            <person name="Woodward J.R."/>
            <person name="Winckler T."/>
            <person name="Tanaka Y."/>
            <person name="Shaulsky G."/>
            <person name="Schleicher M."/>
            <person name="Weinstock G.M."/>
            <person name="Rosenthal A."/>
            <person name="Cox E.C."/>
            <person name="Chisholm R.L."/>
            <person name="Gibbs R.A."/>
            <person name="Loomis W.F."/>
            <person name="Platzer M."/>
            <person name="Kay R.R."/>
            <person name="Williams J.G."/>
            <person name="Dear P.H."/>
            <person name="Noegel A.A."/>
            <person name="Barrell B.G."/>
            <person name="Kuspa A."/>
        </authorList>
    </citation>
    <scope>NUCLEOTIDE SEQUENCE [LARGE SCALE GENOMIC DNA]</scope>
    <source>
        <strain>AX4</strain>
    </source>
</reference>
<keyword id="KW-0021">Allosteric enzyme</keyword>
<keyword id="KW-0051">Antiviral defense</keyword>
<keyword id="KW-0342">GTP-binding</keyword>
<keyword id="KW-0378">Hydrolase</keyword>
<keyword id="KW-0479">Metal-binding</keyword>
<keyword id="KW-0547">Nucleotide-binding</keyword>
<keyword id="KW-1185">Reference proteome</keyword>
<keyword id="KW-0862">Zinc</keyword>
<comment type="function">
    <text evidence="1">Has deoxynucleoside triphosphate (dNTPase) activity.</text>
</comment>
<comment type="catalytic activity">
    <reaction evidence="1">
        <text>a 2'-deoxyribonucleoside 5'-triphosphate + H2O = a 2'-deoxyribonucleoside + triphosphate + H(+)</text>
        <dbReference type="Rhea" id="RHEA:46148"/>
        <dbReference type="ChEBI" id="CHEBI:15377"/>
        <dbReference type="ChEBI" id="CHEBI:15378"/>
        <dbReference type="ChEBI" id="CHEBI:18036"/>
        <dbReference type="ChEBI" id="CHEBI:18274"/>
        <dbReference type="ChEBI" id="CHEBI:61560"/>
    </reaction>
</comment>
<comment type="cofactor">
    <cofactor evidence="1">
        <name>Zn(2+)</name>
        <dbReference type="ChEBI" id="CHEBI:29105"/>
    </cofactor>
    <text evidence="1">Binds 1 zinc ion per subunit.</text>
</comment>
<comment type="activity regulation">
    <text evidence="1">Allosterically activated and regulated via the combined actions of GTP and dNTPs (dATP, dGTP, dTTP and dCTP): Allosteric site 1 binds GTP, while allosteric site 2 binds dNTP. Allosteric activation promotes the formation of highly active homotetramers.</text>
</comment>
<comment type="subunit">
    <text evidence="1">Homodimer; in absence of GTP and dNTP. Homotetramer; in GTP- and dNTP-bound form.</text>
</comment>
<comment type="similarity">
    <text evidence="4">Belongs to the SAMHD1 family.</text>
</comment>
<proteinExistence type="inferred from homology"/>